<proteinExistence type="evidence at transcript level"/>
<comment type="function">
    <text evidence="4 7">FAD-linked oxidoreductase; part of the gene cluster that mediates the biosynthesis of azaterrilone A and other azaphilones, a class of fungal metabolites characterized by a highly oxygenated pyrano-quinone bicyclic core and exhibiting a broad range of bioactivities (PubMed:35398258). The first step of the pathway begins with the non-reducing polyketide synthase tazA that assembles one acetyl-CoA starter unit, five malonyl-CoA units, and catalyzes a series of Claisen condensations, methylation, PT-mediated cyclization, and finally releases the first hexaketide precursor through the R-domain. The tazA product then undergoes reduction on its terminal ketone and the following pyran-ring formation by yet undetermined enzyme(s). Dehydration and enoyl reduction, possibly involving the trans-enoyl reductase tazE leads to the next intermediate. TazD is predicted as an acetyltransferase and might catalyze the acetylation steps leading to the synthesis of azaterrilone A. Azaterrilone A is not the final product of the taz pathway and both the highly reducing polyketide synthase tazB and the dual enzyme tazHJ catalyze late steps of the pathway, leading to the production of the 2 final stereoisomers that contain additional polyketide modification whose structures have still to be determined (Probable).</text>
</comment>
<comment type="pathway">
    <text evidence="7">Secondary metabolite biosynthesis.</text>
</comment>
<comment type="induction">
    <text evidence="4">Expression is positively regulated by the azaterrilone A cluster-specific transcription factor tazR.</text>
</comment>
<comment type="similarity">
    <text evidence="6">Belongs to the oxygen-dependent FAD-linked oxidoreductase family.</text>
</comment>
<dbReference type="EC" id="1.-.-.-" evidence="7"/>
<dbReference type="EMBL" id="CH476597">
    <property type="protein sequence ID" value="EAU36716.1"/>
    <property type="molecule type" value="Genomic_DNA"/>
</dbReference>
<dbReference type="RefSeq" id="XP_001212620.1">
    <property type="nucleotide sequence ID" value="XM_001212620.1"/>
</dbReference>
<dbReference type="SMR" id="Q0CS92"/>
<dbReference type="STRING" id="341663.Q0CS92"/>
<dbReference type="GlyCosmos" id="Q0CS92">
    <property type="glycosylation" value="7 sites, No reported glycans"/>
</dbReference>
<dbReference type="EnsemblFungi" id="EAU36716">
    <property type="protein sequence ID" value="EAU36716"/>
    <property type="gene ID" value="ATEG_03442"/>
</dbReference>
<dbReference type="GeneID" id="4317486"/>
<dbReference type="VEuPathDB" id="FungiDB:ATEG_03442"/>
<dbReference type="eggNOG" id="ENOG502SJ3M">
    <property type="taxonomic scope" value="Eukaryota"/>
</dbReference>
<dbReference type="HOGENOM" id="CLU_018354_0_0_1"/>
<dbReference type="OMA" id="IMVNAVY"/>
<dbReference type="OrthoDB" id="415825at2759"/>
<dbReference type="Proteomes" id="UP000007963">
    <property type="component" value="Unassembled WGS sequence"/>
</dbReference>
<dbReference type="GO" id="GO:0071949">
    <property type="term" value="F:FAD binding"/>
    <property type="evidence" value="ECO:0007669"/>
    <property type="project" value="InterPro"/>
</dbReference>
<dbReference type="GO" id="GO:0016491">
    <property type="term" value="F:oxidoreductase activity"/>
    <property type="evidence" value="ECO:0007669"/>
    <property type="project" value="UniProtKB-KW"/>
</dbReference>
<dbReference type="Gene3D" id="3.30.465.10">
    <property type="match status" value="1"/>
</dbReference>
<dbReference type="Gene3D" id="3.40.462.20">
    <property type="match status" value="1"/>
</dbReference>
<dbReference type="InterPro" id="IPR012951">
    <property type="entry name" value="BBE"/>
</dbReference>
<dbReference type="InterPro" id="IPR016166">
    <property type="entry name" value="FAD-bd_PCMH"/>
</dbReference>
<dbReference type="InterPro" id="IPR036318">
    <property type="entry name" value="FAD-bd_PCMH-like_sf"/>
</dbReference>
<dbReference type="InterPro" id="IPR016169">
    <property type="entry name" value="FAD-bd_PCMH_sub2"/>
</dbReference>
<dbReference type="InterPro" id="IPR016164">
    <property type="entry name" value="FAD-linked_Oxase-like_C"/>
</dbReference>
<dbReference type="InterPro" id="IPR050416">
    <property type="entry name" value="FAD-linked_Oxidoreductase"/>
</dbReference>
<dbReference type="InterPro" id="IPR006094">
    <property type="entry name" value="Oxid_FAD_bind_N"/>
</dbReference>
<dbReference type="PANTHER" id="PTHR42973">
    <property type="entry name" value="BINDING OXIDOREDUCTASE, PUTATIVE (AFU_ORTHOLOGUE AFUA_1G17690)-RELATED"/>
    <property type="match status" value="1"/>
</dbReference>
<dbReference type="PANTHER" id="PTHR42973:SF32">
    <property type="entry name" value="FAD-LINKED OXIDOREDUCTASE AFOF"/>
    <property type="match status" value="1"/>
</dbReference>
<dbReference type="Pfam" id="PF08031">
    <property type="entry name" value="BBE"/>
    <property type="match status" value="1"/>
</dbReference>
<dbReference type="Pfam" id="PF01565">
    <property type="entry name" value="FAD_binding_4"/>
    <property type="match status" value="1"/>
</dbReference>
<dbReference type="SUPFAM" id="SSF56176">
    <property type="entry name" value="FAD-binding/transporter-associated domain-like"/>
    <property type="match status" value="1"/>
</dbReference>
<dbReference type="SUPFAM" id="SSF55103">
    <property type="entry name" value="FAD-linked oxidases, C-terminal domain"/>
    <property type="match status" value="1"/>
</dbReference>
<dbReference type="PROSITE" id="PS51387">
    <property type="entry name" value="FAD_PCMH"/>
    <property type="match status" value="1"/>
</dbReference>
<evidence type="ECO:0000255" key="1"/>
<evidence type="ECO:0000255" key="2">
    <source>
        <dbReference type="PROSITE-ProRule" id="PRU00498"/>
    </source>
</evidence>
<evidence type="ECO:0000255" key="3">
    <source>
        <dbReference type="PROSITE-ProRule" id="PRU00718"/>
    </source>
</evidence>
<evidence type="ECO:0000269" key="4">
    <source>
    </source>
</evidence>
<evidence type="ECO:0000303" key="5">
    <source>
    </source>
</evidence>
<evidence type="ECO:0000305" key="6"/>
<evidence type="ECO:0000305" key="7">
    <source>
    </source>
</evidence>
<gene>
    <name evidence="5" type="primary">tazL</name>
    <name type="ORF">ATEG_03442</name>
</gene>
<feature type="signal peptide" evidence="1">
    <location>
        <begin position="1"/>
        <end position="17"/>
    </location>
</feature>
<feature type="chain" id="PRO_5004170553" description="FAD-linked oxidoreductase tazL">
    <location>
        <begin position="18"/>
        <end position="493"/>
    </location>
</feature>
<feature type="domain" description="FAD-binding PCMH-type" evidence="3">
    <location>
        <begin position="63"/>
        <end position="235"/>
    </location>
</feature>
<feature type="glycosylation site" description="N-linked (GlcNAc...) asparagine" evidence="2">
    <location>
        <position position="29"/>
    </location>
</feature>
<feature type="glycosylation site" description="N-linked (GlcNAc...) asparagine" evidence="2">
    <location>
        <position position="41"/>
    </location>
</feature>
<feature type="glycosylation site" description="N-linked (GlcNAc...) asparagine" evidence="2">
    <location>
        <position position="53"/>
    </location>
</feature>
<feature type="glycosylation site" description="N-linked (GlcNAc...) asparagine" evidence="2">
    <location>
        <position position="91"/>
    </location>
</feature>
<feature type="glycosylation site" description="N-linked (GlcNAc...) asparagine" evidence="2">
    <location>
        <position position="253"/>
    </location>
</feature>
<feature type="glycosylation site" description="N-linked (GlcNAc...) asparagine" evidence="2">
    <location>
        <position position="318"/>
    </location>
</feature>
<feature type="glycosylation site" description="N-linked (GlcNAc...) asparagine" evidence="2">
    <location>
        <position position="387"/>
    </location>
</feature>
<keyword id="KW-0274">FAD</keyword>
<keyword id="KW-0285">Flavoprotein</keyword>
<keyword id="KW-0325">Glycoprotein</keyword>
<keyword id="KW-0560">Oxidoreductase</keyword>
<keyword id="KW-1185">Reference proteome</keyword>
<keyword id="KW-0732">Signal</keyword>
<protein>
    <recommendedName>
        <fullName evidence="5">FAD-linked oxidoreductase tazL</fullName>
        <ecNumber evidence="7">1.-.-.-</ecNumber>
    </recommendedName>
    <alternativeName>
        <fullName evidence="5">Azaphilone biosynthesis cluster protein L</fullName>
    </alternativeName>
</protein>
<name>TAZL_ASPTN</name>
<reference key="1">
    <citation type="submission" date="2005-09" db="EMBL/GenBank/DDBJ databases">
        <title>Annotation of the Aspergillus terreus NIH2624 genome.</title>
        <authorList>
            <person name="Birren B.W."/>
            <person name="Lander E.S."/>
            <person name="Galagan J.E."/>
            <person name="Nusbaum C."/>
            <person name="Devon K."/>
            <person name="Henn M."/>
            <person name="Ma L.-J."/>
            <person name="Jaffe D.B."/>
            <person name="Butler J."/>
            <person name="Alvarez P."/>
            <person name="Gnerre S."/>
            <person name="Grabherr M."/>
            <person name="Kleber M."/>
            <person name="Mauceli E.W."/>
            <person name="Brockman W."/>
            <person name="Rounsley S."/>
            <person name="Young S.K."/>
            <person name="LaButti K."/>
            <person name="Pushparaj V."/>
            <person name="DeCaprio D."/>
            <person name="Crawford M."/>
            <person name="Koehrsen M."/>
            <person name="Engels R."/>
            <person name="Montgomery P."/>
            <person name="Pearson M."/>
            <person name="Howarth C."/>
            <person name="Larson L."/>
            <person name="Luoma S."/>
            <person name="White J."/>
            <person name="Alvarado L."/>
            <person name="Kodira C.D."/>
            <person name="Zeng Q."/>
            <person name="Oleary S."/>
            <person name="Yandava C."/>
            <person name="Denning D.W."/>
            <person name="Nierman W.C."/>
            <person name="Milne T."/>
            <person name="Madden K."/>
        </authorList>
    </citation>
    <scope>NUCLEOTIDE SEQUENCE [LARGE SCALE GENOMIC DNA]</scope>
    <source>
        <strain>NIH 2624 / FGSC A1156</strain>
    </source>
</reference>
<reference key="2">
    <citation type="journal article" date="2022" name="Fungal Genet. Biol.">
        <title>Characterization of a silent azaphilone biosynthesis gene cluster in Aspergillus terreus NIH 2624.</title>
        <authorList>
            <person name="Sun W.W."/>
            <person name="Li C.Y."/>
            <person name="Chiang Y.M."/>
            <person name="Lin T.S."/>
            <person name="Warren S."/>
            <person name="Chang F.R."/>
            <person name="Wang C.C.C."/>
        </authorList>
    </citation>
    <scope>FUNCTION</scope>
    <scope>INDUCTION</scope>
    <scope>PATHWAY</scope>
</reference>
<accession>Q0CS92</accession>
<organism>
    <name type="scientific">Aspergillus terreus (strain NIH 2624 / FGSC A1156)</name>
    <dbReference type="NCBI Taxonomy" id="341663"/>
    <lineage>
        <taxon>Eukaryota</taxon>
        <taxon>Fungi</taxon>
        <taxon>Dikarya</taxon>
        <taxon>Ascomycota</taxon>
        <taxon>Pezizomycotina</taxon>
        <taxon>Eurotiomycetes</taxon>
        <taxon>Eurotiomycetidae</taxon>
        <taxon>Eurotiales</taxon>
        <taxon>Aspergillaceae</taxon>
        <taxon>Aspergillus</taxon>
        <taxon>Aspergillus subgen. Circumdati</taxon>
    </lineage>
</organism>
<sequence>MRSNTVILAALPLVASAASTSGNWGGGVNYSKIFGGGLSANASIHYPGQPDYNTTTVQRWSTWAEPTFAVTIKPATDEDVQYIIRTANKYNLTFLATGGGHGGETGFATVKHAVNIDLSNFKENVLDLEANTLTVGPGNSFSAFETNLYNAGKMVPVGNAFCVNMIGATIGAGVGPYQGLHGLVIDALRSVRLVTASGDIVTASDEENPDLFWAVRGAGANFGIITSATYEIFDAPNNGNVVLAEFAYPGSVNGSLWQLLESWGETYPKEMGLTMSASYSQTTGTTSSSASLTYFGTQEAAQPWIDQLLALNPTQWRNATLPWSEVSQNSGFGTGASVCATGKYNNHPSVGAKQTSVSTYIEVFNQYVEIMKARPWLTSALVVQRFNTTATLAVPESKRGVYPGRDFSSLIILENYYDGPRHDADVYRFSKKLRSQLVATSGFDSLQTYINYAHGDEGPEVWYGKDNLPRLVQLKRQWDPEGKFGPGNPIPLA</sequence>